<name>LEUE_ECOL5</name>
<proteinExistence type="inferred from homology"/>
<organism>
    <name type="scientific">Escherichia coli O6:K15:H31 (strain 536 / UPEC)</name>
    <dbReference type="NCBI Taxonomy" id="362663"/>
    <lineage>
        <taxon>Bacteria</taxon>
        <taxon>Pseudomonadati</taxon>
        <taxon>Pseudomonadota</taxon>
        <taxon>Gammaproteobacteria</taxon>
        <taxon>Enterobacterales</taxon>
        <taxon>Enterobacteriaceae</taxon>
        <taxon>Escherichia</taxon>
    </lineage>
</organism>
<gene>
    <name type="primary">leuE</name>
    <name type="ordered locus">ECP_1745</name>
</gene>
<dbReference type="EMBL" id="CP000247">
    <property type="protein sequence ID" value="ABG69748.1"/>
    <property type="molecule type" value="Genomic_DNA"/>
</dbReference>
<dbReference type="RefSeq" id="WP_000457211.1">
    <property type="nucleotide sequence ID" value="NC_008253.1"/>
</dbReference>
<dbReference type="SMR" id="Q0TH31"/>
<dbReference type="KEGG" id="ecp:ECP_1745"/>
<dbReference type="HOGENOM" id="CLU_079569_3_1_6"/>
<dbReference type="Proteomes" id="UP000009182">
    <property type="component" value="Chromosome"/>
</dbReference>
<dbReference type="GO" id="GO:0005886">
    <property type="term" value="C:plasma membrane"/>
    <property type="evidence" value="ECO:0007669"/>
    <property type="project" value="UniProtKB-SubCell"/>
</dbReference>
<dbReference type="GO" id="GO:0015297">
    <property type="term" value="F:antiporter activity"/>
    <property type="evidence" value="ECO:0007669"/>
    <property type="project" value="UniProtKB-KW"/>
</dbReference>
<dbReference type="GO" id="GO:0015190">
    <property type="term" value="F:L-leucine transmembrane transporter activity"/>
    <property type="evidence" value="ECO:0007669"/>
    <property type="project" value="TreeGrafter"/>
</dbReference>
<dbReference type="GO" id="GO:0015820">
    <property type="term" value="P:L-leucine transport"/>
    <property type="evidence" value="ECO:0007669"/>
    <property type="project" value="TreeGrafter"/>
</dbReference>
<dbReference type="InterPro" id="IPR001123">
    <property type="entry name" value="LeuE-type"/>
</dbReference>
<dbReference type="NCBIfam" id="NF008201">
    <property type="entry name" value="PRK10958.1"/>
    <property type="match status" value="1"/>
</dbReference>
<dbReference type="PANTHER" id="PTHR30086">
    <property type="entry name" value="ARGININE EXPORTER PROTEIN ARGO"/>
    <property type="match status" value="1"/>
</dbReference>
<dbReference type="PANTHER" id="PTHR30086:SF15">
    <property type="entry name" value="LEUCINE EFFLUX PROTEIN"/>
    <property type="match status" value="1"/>
</dbReference>
<dbReference type="Pfam" id="PF01810">
    <property type="entry name" value="LysE"/>
    <property type="match status" value="1"/>
</dbReference>
<dbReference type="PIRSF" id="PIRSF006324">
    <property type="entry name" value="LeuE"/>
    <property type="match status" value="1"/>
</dbReference>
<comment type="function">
    <text evidence="1">Exporter of leucine.</text>
</comment>
<comment type="catalytic activity">
    <reaction evidence="1">
        <text>L-leucine(in) + H(+)(out) = L-leucine(out) + H(+)(in)</text>
        <dbReference type="Rhea" id="RHEA:28731"/>
        <dbReference type="ChEBI" id="CHEBI:15378"/>
        <dbReference type="ChEBI" id="CHEBI:57427"/>
    </reaction>
    <physiologicalReaction direction="left-to-right" evidence="1">
        <dbReference type="Rhea" id="RHEA:28732"/>
    </physiologicalReaction>
</comment>
<comment type="subcellular location">
    <subcellularLocation>
        <location evidence="1">Cell inner membrane</location>
        <topology evidence="2">Multi-pass membrane protein</topology>
    </subcellularLocation>
</comment>
<comment type="similarity">
    <text evidence="3">Belongs to the Rht family.</text>
</comment>
<evidence type="ECO:0000250" key="1">
    <source>
        <dbReference type="UniProtKB" id="P76249"/>
    </source>
</evidence>
<evidence type="ECO:0000255" key="2"/>
<evidence type="ECO:0000305" key="3"/>
<feature type="chain" id="PRO_0000316803" description="Leucine efflux protein">
    <location>
        <begin position="1"/>
        <end position="212"/>
    </location>
</feature>
<feature type="transmembrane region" description="Helical" evidence="2">
    <location>
        <begin position="12"/>
        <end position="32"/>
    </location>
</feature>
<feature type="transmembrane region" description="Helical" evidence="2">
    <location>
        <begin position="49"/>
        <end position="69"/>
    </location>
</feature>
<feature type="transmembrane region" description="Helical" evidence="2">
    <location>
        <begin position="71"/>
        <end position="91"/>
    </location>
</feature>
<feature type="transmembrane region" description="Helical" evidence="2">
    <location>
        <begin position="122"/>
        <end position="142"/>
    </location>
</feature>
<feature type="transmembrane region" description="Helical" evidence="2">
    <location>
        <begin position="153"/>
        <end position="173"/>
    </location>
</feature>
<feature type="transmembrane region" description="Helical" evidence="2">
    <location>
        <begin position="188"/>
        <end position="208"/>
    </location>
</feature>
<accession>Q0TH31</accession>
<protein>
    <recommendedName>
        <fullName evidence="1">Leucine efflux protein</fullName>
    </recommendedName>
</protein>
<keyword id="KW-0029">Amino-acid transport</keyword>
<keyword id="KW-0050">Antiport</keyword>
<keyword id="KW-0997">Cell inner membrane</keyword>
<keyword id="KW-1003">Cell membrane</keyword>
<keyword id="KW-0472">Membrane</keyword>
<keyword id="KW-0812">Transmembrane</keyword>
<keyword id="KW-1133">Transmembrane helix</keyword>
<keyword id="KW-0813">Transport</keyword>
<sequence length="212" mass="23261">MFAEYGVLNYWTYLVGAIFIVLVPGPNTLFVLKNSVSSGMKGGYLAACGVFIGDAVLMFLAWAGVATLIKTTPILFNIVRYLGAFYLLYLGSKILYATLKGKNSETKSDEPQYGAIFKRALILSLTNPKAILFYVSFFVQFIDVNAPHTGISFFILATTLELVSFCYLSFLIISGAFVTQYIRTKKKLAKVGNSLIGLMFVGFAARLATLQS</sequence>
<reference key="1">
    <citation type="journal article" date="2006" name="Mol. Microbiol.">
        <title>Role of pathogenicity island-associated integrases in the genome plasticity of uropathogenic Escherichia coli strain 536.</title>
        <authorList>
            <person name="Hochhut B."/>
            <person name="Wilde C."/>
            <person name="Balling G."/>
            <person name="Middendorf B."/>
            <person name="Dobrindt U."/>
            <person name="Brzuszkiewicz E."/>
            <person name="Gottschalk G."/>
            <person name="Carniel E."/>
            <person name="Hacker J."/>
        </authorList>
    </citation>
    <scope>NUCLEOTIDE SEQUENCE [LARGE SCALE GENOMIC DNA]</scope>
    <source>
        <strain>536 / UPEC</strain>
    </source>
</reference>